<sequence>MATEEHQRLASIVKSCHESLRQLTKEYGATAAWQEHTSPRNAKQLAEYAKAMKQLAAIWETNDGKVELQARSRIKWAIDYITKYFFTEGIYLQKRQREQRLLESYRAEGKLGEVQCRLMEEPPDRLHVLDVGSCFNPFSSAPHLEVTALDLCPATEDVLQADFLKVEVVPGIREPELEEGSVRRLPASHYECVIFSLLLEYMPSAEQRLQCCLQAYDLLLPEGILVLITPDSQHVGKNAHLMKNWRYSLARIGLLRVRFEKLPHISCMVFRKAISRELSQHWASIHREEGMCEEIRIPQDDS</sequence>
<feature type="chain" id="PRO_0000321545" description="S-adenosylmethionine sensor upstream of mTORC1">
    <location>
        <begin position="1"/>
        <end position="302"/>
    </location>
</feature>
<feature type="binding site" evidence="3 15">
    <location>
        <position position="73"/>
    </location>
    <ligand>
        <name>S-adenosyl-L-homocysteine</name>
        <dbReference type="ChEBI" id="CHEBI:57856"/>
    </ligand>
</feature>
<feature type="binding site" evidence="3 16 17 18">
    <location>
        <position position="73"/>
    </location>
    <ligand>
        <name>S-adenosyl-L-methionine</name>
        <dbReference type="ChEBI" id="CHEBI:59789"/>
    </ligand>
</feature>
<feature type="binding site" evidence="3 15">
    <location>
        <position position="132"/>
    </location>
    <ligand>
        <name>S-adenosyl-L-homocysteine</name>
        <dbReference type="ChEBI" id="CHEBI:57856"/>
    </ligand>
</feature>
<feature type="binding site" evidence="1 3 16 18">
    <location>
        <position position="132"/>
    </location>
    <ligand>
        <name>S-adenosyl-L-methionine</name>
        <dbReference type="ChEBI" id="CHEBI:59789"/>
    </ligand>
</feature>
<feature type="binding site" evidence="3 15">
    <location>
        <position position="150"/>
    </location>
    <ligand>
        <name>S-adenosyl-L-homocysteine</name>
        <dbReference type="ChEBI" id="CHEBI:57856"/>
    </ligand>
</feature>
<feature type="binding site" evidence="1 3 16 17 18">
    <location>
        <position position="150"/>
    </location>
    <ligand>
        <name>S-adenosyl-L-methionine</name>
        <dbReference type="ChEBI" id="CHEBI:59789"/>
    </ligand>
</feature>
<feature type="binding site" evidence="18">
    <location>
        <position position="151"/>
    </location>
    <ligand>
        <name>S-adenosyl-L-methionine</name>
        <dbReference type="ChEBI" id="CHEBI:59789"/>
    </ligand>
</feature>
<feature type="binding site" evidence="3 15">
    <location>
        <position position="162"/>
    </location>
    <ligand>
        <name>S-adenosyl-L-homocysteine</name>
        <dbReference type="ChEBI" id="CHEBI:57856"/>
    </ligand>
</feature>
<feature type="binding site" evidence="3 16 17 18">
    <location>
        <position position="162"/>
    </location>
    <ligand>
        <name>S-adenosyl-L-methionine</name>
        <dbReference type="ChEBI" id="CHEBI:59789"/>
    </ligand>
</feature>
<feature type="binding site" evidence="3 15">
    <location>
        <position position="163"/>
    </location>
    <ligand>
        <name>S-adenosyl-L-homocysteine</name>
        <dbReference type="ChEBI" id="CHEBI:57856"/>
    </ligand>
</feature>
<feature type="binding site" evidence="3 16 17 18">
    <location>
        <position position="163"/>
    </location>
    <ligand>
        <name>S-adenosyl-L-methionine</name>
        <dbReference type="ChEBI" id="CHEBI:59789"/>
    </ligand>
</feature>
<feature type="binding site" evidence="3 15">
    <location>
        <position position="196"/>
    </location>
    <ligand>
        <name>S-adenosyl-L-homocysteine</name>
        <dbReference type="ChEBI" id="CHEBI:57856"/>
    </ligand>
</feature>
<feature type="binding site" evidence="3 16 17 18">
    <location>
        <position position="196"/>
    </location>
    <ligand>
        <name>S-adenosyl-L-methionine</name>
        <dbReference type="ChEBI" id="CHEBI:59789"/>
    </ligand>
</feature>
<feature type="mutagenesis site" description="Abolished binding to S-adenosyl-L-homocysteine." evidence="3">
    <original>L</original>
    <variation>A</variation>
    <location>
        <position position="151"/>
    </location>
</feature>
<feature type="mutagenesis site" description="Abolished binding to S-adenosyl-L-homocysteine." evidence="3">
    <original>F</original>
    <variation>A</variation>
    <location>
        <position position="163"/>
    </location>
</feature>
<feature type="mutagenesis site" description="Abolished binding to S-adenosyl-L-homocysteine." evidence="3">
    <original>L</original>
    <variation>A</variation>
    <location>
        <position position="197"/>
    </location>
</feature>
<feature type="mutagenesis site" description="Reduced binding to S-adenosyl-L-homocysteine." evidence="3">
    <original>Y</original>
    <variation>A</variation>
    <location>
        <position position="201"/>
    </location>
</feature>
<feature type="mutagenesis site" description="Abolished binding to S-adenosyl-L-homocysteine." evidence="3">
    <original>M</original>
    <variation>A</variation>
    <location>
        <position position="202"/>
    </location>
</feature>
<feature type="helix" evidence="20">
    <location>
        <begin position="75"/>
        <end position="85"/>
    </location>
</feature>
<feature type="helix" evidence="20">
    <location>
        <begin position="90"/>
        <end position="106"/>
    </location>
</feature>
<feature type="turn" evidence="20">
    <location>
        <begin position="107"/>
        <end position="109"/>
    </location>
</feature>
<feature type="strand" evidence="20">
    <location>
        <begin position="124"/>
        <end position="132"/>
    </location>
</feature>
<feature type="turn" evidence="19">
    <location>
        <begin position="137"/>
        <end position="140"/>
    </location>
</feature>
<feature type="strand" evidence="20">
    <location>
        <begin position="144"/>
        <end position="152"/>
    </location>
</feature>
<feature type="strand" evidence="20">
    <location>
        <begin position="158"/>
        <end position="160"/>
    </location>
</feature>
<feature type="turn" evidence="20">
    <location>
        <begin position="163"/>
        <end position="165"/>
    </location>
</feature>
<feature type="strand" evidence="20">
    <location>
        <begin position="167"/>
        <end position="169"/>
    </location>
</feature>
<feature type="strand" evidence="20">
    <location>
        <begin position="176"/>
        <end position="178"/>
    </location>
</feature>
<feature type="strand" evidence="20">
    <location>
        <begin position="181"/>
        <end position="188"/>
    </location>
</feature>
<feature type="strand" evidence="20">
    <location>
        <begin position="190"/>
        <end position="197"/>
    </location>
</feature>
<feature type="helix" evidence="20">
    <location>
        <begin position="198"/>
        <end position="201"/>
    </location>
</feature>
<feature type="strand" evidence="19">
    <location>
        <begin position="202"/>
        <end position="204"/>
    </location>
</feature>
<feature type="helix" evidence="20">
    <location>
        <begin position="205"/>
        <end position="218"/>
    </location>
</feature>
<feature type="strand" evidence="20">
    <location>
        <begin position="219"/>
        <end position="230"/>
    </location>
</feature>
<feature type="helix" evidence="20">
    <location>
        <begin position="231"/>
        <end position="233"/>
    </location>
</feature>
<feature type="strand" evidence="20">
    <location>
        <begin position="235"/>
        <end position="238"/>
    </location>
</feature>
<feature type="helix" evidence="21">
    <location>
        <begin position="243"/>
        <end position="245"/>
    </location>
</feature>
<feature type="helix" evidence="20">
    <location>
        <begin position="246"/>
        <end position="252"/>
    </location>
</feature>
<feature type="strand" evidence="20">
    <location>
        <begin position="254"/>
        <end position="260"/>
    </location>
</feature>
<feature type="strand" evidence="20">
    <location>
        <begin position="265"/>
        <end position="272"/>
    </location>
</feature>
<feature type="helix" evidence="20">
    <location>
        <begin position="276"/>
        <end position="285"/>
    </location>
</feature>
<feature type="helix" evidence="20">
    <location>
        <begin position="287"/>
        <end position="293"/>
    </location>
</feature>
<feature type="helix" evidence="19">
    <location>
        <begin position="298"/>
        <end position="300"/>
    </location>
</feature>
<organism evidence="13">
    <name type="scientific">Drosophila melanogaster</name>
    <name type="common">Fruit fly</name>
    <dbReference type="NCBI Taxonomy" id="7227"/>
    <lineage>
        <taxon>Eukaryota</taxon>
        <taxon>Metazoa</taxon>
        <taxon>Ecdysozoa</taxon>
        <taxon>Arthropoda</taxon>
        <taxon>Hexapoda</taxon>
        <taxon>Insecta</taxon>
        <taxon>Pterygota</taxon>
        <taxon>Neoptera</taxon>
        <taxon>Endopterygota</taxon>
        <taxon>Diptera</taxon>
        <taxon>Brachycera</taxon>
        <taxon>Muscomorpha</taxon>
        <taxon>Ephydroidea</taxon>
        <taxon>Drosophilidae</taxon>
        <taxon>Drosophila</taxon>
        <taxon>Sophophora</taxon>
    </lineage>
</organism>
<keyword id="KW-0002">3D-structure</keyword>
<keyword id="KW-0489">Methyltransferase</keyword>
<keyword id="KW-1185">Reference proteome</keyword>
<keyword id="KW-0949">S-adenosyl-L-methionine</keyword>
<keyword id="KW-0808">Transferase</keyword>
<evidence type="ECO:0000255" key="1">
    <source>
        <dbReference type="HAMAP-Rule" id="MF_03044"/>
    </source>
</evidence>
<evidence type="ECO:0000269" key="2">
    <source>
    </source>
</evidence>
<evidence type="ECO:0000269" key="3">
    <source>
    </source>
</evidence>
<evidence type="ECO:0000269" key="4">
    <source>
    </source>
</evidence>
<evidence type="ECO:0000269" key="5">
    <source>
    </source>
</evidence>
<evidence type="ECO:0000303" key="6">
    <source>
    </source>
</evidence>
<evidence type="ECO:0000305" key="7">
    <source>
    </source>
</evidence>
<evidence type="ECO:0000312" key="8">
    <source>
        <dbReference type="FlyBase" id="FBgn0035035"/>
    </source>
</evidence>
<evidence type="ECO:0000312" key="9">
    <source>
        <dbReference type="PDB" id="7YRI"/>
    </source>
</evidence>
<evidence type="ECO:0000312" key="10">
    <source>
        <dbReference type="PDB" id="7YRJ"/>
    </source>
</evidence>
<evidence type="ECO:0000312" key="11">
    <source>
        <dbReference type="PDB" id="8GMY"/>
    </source>
</evidence>
<evidence type="ECO:0000312" key="12">
    <source>
        <dbReference type="PDB" id="8GMZ"/>
    </source>
</evidence>
<evidence type="ECO:0000312" key="13">
    <source>
        <dbReference type="Proteomes" id="UP000000803"/>
    </source>
</evidence>
<evidence type="ECO:0007744" key="14">
    <source>
        <dbReference type="PDB" id="7VKK"/>
    </source>
</evidence>
<evidence type="ECO:0007744" key="15">
    <source>
        <dbReference type="PDB" id="7VKQ"/>
    </source>
</evidence>
<evidence type="ECO:0007744" key="16">
    <source>
        <dbReference type="PDB" id="7VKR"/>
    </source>
</evidence>
<evidence type="ECO:0007744" key="17">
    <source>
        <dbReference type="PDB" id="7YRI"/>
    </source>
</evidence>
<evidence type="ECO:0007744" key="18">
    <source>
        <dbReference type="PDB" id="7YRJ"/>
    </source>
</evidence>
<evidence type="ECO:0007829" key="19">
    <source>
        <dbReference type="PDB" id="7VKQ"/>
    </source>
</evidence>
<evidence type="ECO:0007829" key="20">
    <source>
        <dbReference type="PDB" id="8GMY"/>
    </source>
</evidence>
<evidence type="ECO:0007829" key="21">
    <source>
        <dbReference type="PDB" id="8GMZ"/>
    </source>
</evidence>
<protein>
    <recommendedName>
        <fullName evidence="1 6 8">S-adenosylmethionine sensor upstream of mTORC1</fullName>
        <shortName evidence="6">dSamtor</shortName>
    </recommendedName>
    <alternativeName>
        <fullName evidence="1">Probable methyltransferase BMT2 homolog</fullName>
        <ecNumber evidence="1">2.1.1.-</ecNumber>
    </alternativeName>
</protein>
<name>SAMTR_DROME</name>
<comment type="function">
    <text evidence="1 2 3 5">S-adenosyl-L-methionine-binding protein (PubMed:29123071, PubMed:35776786). It is unclear whether this protein acts as a sensor of S-adenosyl-L-methionine to signal methionine sufficiency to mTORC1 (PubMed:29123071, PubMed:35776786, PubMed:38514639). Probably acts as a S-adenosyl-L-methionine-dependent methyltransferase.</text>
</comment>
<comment type="disruption phenotype">
    <text evidence="4">RNAi-mediated knockdown in the whole organism is embryonic lethal (PubMed:37298625). RNAi-mediated tissue specific knockdown in neuronal tissue, glial cells, motor neurons or muscle cells is embryonic lethal (PubMed:37298625). RNAi-mediated tissue specific knockdown in midgut is viable but results in reduced adult lifespan (PubMed:37298625). RNAi-mediated tissue specific knockdown in eye imaginal discs is viable but results in age-dependent eye dysmorphia with loss of cilia (PubMed:37298625). RNAi-mediated tissue specific knockdown in wing imaginal discs is viable but results in severely deformed wings (PubMed:37298625).</text>
</comment>
<comment type="similarity">
    <text evidence="1">Belongs to the BMT2/SAMTOR family.</text>
</comment>
<comment type="caution">
    <text evidence="2 3 5 7">Was originally thought to function as a nutrient sensor for methionine, inhibiting the TORC1 signaling pathway in the absence of S-adenosyl-L-methionine-binding (PubMed:29123071, PubMed:35776786). Subsequent studies showed that this conclusion may have been based on RNAi-mediated experimental artifacts and instead ascribe this function to the methyltransferase unmet (PubMed:38514639). The involvement of Samtor in this process in Diptera, if any, remains unknown.</text>
</comment>
<dbReference type="EC" id="2.1.1.-" evidence="1"/>
<dbReference type="EMBL" id="AE013599">
    <property type="protein sequence ID" value="AAF47239.1"/>
    <property type="molecule type" value="Genomic_DNA"/>
</dbReference>
<dbReference type="EMBL" id="AY051416">
    <property type="protein sequence ID" value="AAK92840.1"/>
    <property type="molecule type" value="mRNA"/>
</dbReference>
<dbReference type="RefSeq" id="NP_611943.1">
    <property type="nucleotide sequence ID" value="NM_138099.3"/>
</dbReference>
<dbReference type="PDB" id="7VKK">
    <property type="method" value="X-ray"/>
    <property type="resolution" value="3.55 A"/>
    <property type="chains" value="A/B=1-302"/>
</dbReference>
<dbReference type="PDB" id="7VKQ">
    <property type="method" value="X-ray"/>
    <property type="resolution" value="2.09 A"/>
    <property type="chains" value="A/B/C/D=1-302"/>
</dbReference>
<dbReference type="PDB" id="7VKR">
    <property type="method" value="X-ray"/>
    <property type="resolution" value="2.10 A"/>
    <property type="chains" value="A/B/C/D=1-302"/>
</dbReference>
<dbReference type="PDB" id="7YRI">
    <property type="method" value="X-ray"/>
    <property type="resolution" value="2.61 A"/>
    <property type="chains" value="A/C/D/J=67-302"/>
</dbReference>
<dbReference type="PDB" id="7YRJ">
    <property type="method" value="X-ray"/>
    <property type="resolution" value="2.35 A"/>
    <property type="chains" value="A/B/C/D=67-302"/>
</dbReference>
<dbReference type="PDB" id="8GMY">
    <property type="method" value="X-ray"/>
    <property type="resolution" value="1.70 A"/>
    <property type="chains" value="D=67-302"/>
</dbReference>
<dbReference type="PDB" id="8GMZ">
    <property type="method" value="X-ray"/>
    <property type="resolution" value="1.88 A"/>
    <property type="chains" value="D=67-302"/>
</dbReference>
<dbReference type="PDBsum" id="7VKK"/>
<dbReference type="PDBsum" id="7VKQ"/>
<dbReference type="PDBsum" id="7VKR"/>
<dbReference type="PDBsum" id="7YRI"/>
<dbReference type="PDBsum" id="7YRJ"/>
<dbReference type="PDBsum" id="8GMY"/>
<dbReference type="PDBsum" id="8GMZ"/>
<dbReference type="SMR" id="Q9W138"/>
<dbReference type="BioGRID" id="63506">
    <property type="interactions" value="1"/>
</dbReference>
<dbReference type="FunCoup" id="Q9W138">
    <property type="interactions" value="942"/>
</dbReference>
<dbReference type="IntAct" id="Q9W138">
    <property type="interactions" value="2"/>
</dbReference>
<dbReference type="STRING" id="7227.FBpp0072224"/>
<dbReference type="PaxDb" id="7227-FBpp0072224"/>
<dbReference type="DNASU" id="37934"/>
<dbReference type="EnsemblMetazoa" id="FBtr0072317">
    <property type="protein sequence ID" value="FBpp0072224"/>
    <property type="gene ID" value="FBgn0035035"/>
</dbReference>
<dbReference type="GeneID" id="37934"/>
<dbReference type="KEGG" id="dme:Dmel_CG3570"/>
<dbReference type="UCSC" id="CG3570-RA">
    <property type="organism name" value="d. melanogaster"/>
</dbReference>
<dbReference type="AGR" id="FB:FBgn0035035"/>
<dbReference type="CTD" id="154743"/>
<dbReference type="FlyBase" id="FBgn0035035">
    <property type="gene designation" value="Samtor"/>
</dbReference>
<dbReference type="VEuPathDB" id="VectorBase:FBgn0035035"/>
<dbReference type="eggNOG" id="ENOG502QRK4">
    <property type="taxonomic scope" value="Eukaryota"/>
</dbReference>
<dbReference type="GeneTree" id="ENSGT00390000010382"/>
<dbReference type="HOGENOM" id="CLU_036404_0_0_1"/>
<dbReference type="InParanoid" id="Q9W138"/>
<dbReference type="OMA" id="CCQKAYE"/>
<dbReference type="OrthoDB" id="5954793at2759"/>
<dbReference type="PhylomeDB" id="Q9W138"/>
<dbReference type="SignaLink" id="Q9W138"/>
<dbReference type="BioGRID-ORCS" id="37934">
    <property type="hits" value="0 hits in 1 CRISPR screen"/>
</dbReference>
<dbReference type="GenomeRNAi" id="37934"/>
<dbReference type="PRO" id="PR:Q9W138"/>
<dbReference type="Proteomes" id="UP000000803">
    <property type="component" value="Chromosome 2R"/>
</dbReference>
<dbReference type="Bgee" id="FBgn0035035">
    <property type="expression patterns" value="Expressed in adult class III enteroendocrine cell in adult midgut (Drosophila) and 60 other cell types or tissues"/>
</dbReference>
<dbReference type="GO" id="GO:0140785">
    <property type="term" value="F:amino acid sensor activity"/>
    <property type="evidence" value="ECO:0000314"/>
    <property type="project" value="FlyBase"/>
</dbReference>
<dbReference type="GO" id="GO:0008168">
    <property type="term" value="F:methyltransferase activity"/>
    <property type="evidence" value="ECO:0007669"/>
    <property type="project" value="UniProtKB-UniRule"/>
</dbReference>
<dbReference type="GO" id="GO:0044877">
    <property type="term" value="F:protein-containing complex binding"/>
    <property type="evidence" value="ECO:0000250"/>
    <property type="project" value="FlyBase"/>
</dbReference>
<dbReference type="GO" id="GO:1904047">
    <property type="term" value="F:S-adenosyl-L-methionine binding"/>
    <property type="evidence" value="ECO:0000314"/>
    <property type="project" value="UniProtKB"/>
</dbReference>
<dbReference type="GO" id="GO:0034198">
    <property type="term" value="P:cellular response to amino acid starvation"/>
    <property type="evidence" value="ECO:0000315"/>
    <property type="project" value="FlyBase"/>
</dbReference>
<dbReference type="GO" id="GO:0061431">
    <property type="term" value="P:cellular response to methionine"/>
    <property type="evidence" value="ECO:0000315"/>
    <property type="project" value="FlyBase"/>
</dbReference>
<dbReference type="GO" id="GO:0032259">
    <property type="term" value="P:methylation"/>
    <property type="evidence" value="ECO:0007669"/>
    <property type="project" value="UniProtKB-KW"/>
</dbReference>
<dbReference type="GO" id="GO:1904262">
    <property type="term" value="P:negative regulation of TORC1 signaling"/>
    <property type="evidence" value="ECO:0000315"/>
    <property type="project" value="UniProtKB"/>
</dbReference>
<dbReference type="FunFam" id="3.40.50.150:FF:000671">
    <property type="entry name" value="S-adenosylmethionine sensor upstream of mTORC1"/>
    <property type="match status" value="1"/>
</dbReference>
<dbReference type="Gene3D" id="3.40.50.150">
    <property type="entry name" value="Vaccinia Virus protein VP39"/>
    <property type="match status" value="1"/>
</dbReference>
<dbReference type="HAMAP" id="MF_03044">
    <property type="entry name" value="BMT2"/>
    <property type="match status" value="1"/>
</dbReference>
<dbReference type="InterPro" id="IPR021867">
    <property type="entry name" value="Bmt2/SAMTOR"/>
</dbReference>
<dbReference type="InterPro" id="IPR029063">
    <property type="entry name" value="SAM-dependent_MTases_sf"/>
</dbReference>
<dbReference type="PANTHER" id="PTHR21008:SF0">
    <property type="entry name" value="S-ADENOSYLMETHIONINE SENSOR UPSTREAM OF MTORC1"/>
    <property type="match status" value="1"/>
</dbReference>
<dbReference type="PANTHER" id="PTHR21008">
    <property type="entry name" value="S-ADENOSYLMETHIONINE SENSOR UPSTREAM OF MTORC1-RELATED"/>
    <property type="match status" value="1"/>
</dbReference>
<dbReference type="Pfam" id="PF11968">
    <property type="entry name" value="Bmt2"/>
    <property type="match status" value="1"/>
</dbReference>
<dbReference type="SUPFAM" id="SSF53335">
    <property type="entry name" value="S-adenosyl-L-methionine-dependent methyltransferases"/>
    <property type="match status" value="1"/>
</dbReference>
<accession>Q9W138</accession>
<reference key="1">
    <citation type="journal article" date="2000" name="Science">
        <title>The genome sequence of Drosophila melanogaster.</title>
        <authorList>
            <person name="Adams M.D."/>
            <person name="Celniker S.E."/>
            <person name="Holt R.A."/>
            <person name="Evans C.A."/>
            <person name="Gocayne J.D."/>
            <person name="Amanatides P.G."/>
            <person name="Scherer S.E."/>
            <person name="Li P.W."/>
            <person name="Hoskins R.A."/>
            <person name="Galle R.F."/>
            <person name="George R.A."/>
            <person name="Lewis S.E."/>
            <person name="Richards S."/>
            <person name="Ashburner M."/>
            <person name="Henderson S.N."/>
            <person name="Sutton G.G."/>
            <person name="Wortman J.R."/>
            <person name="Yandell M.D."/>
            <person name="Zhang Q."/>
            <person name="Chen L.X."/>
            <person name="Brandon R.C."/>
            <person name="Rogers Y.-H.C."/>
            <person name="Blazej R.G."/>
            <person name="Champe M."/>
            <person name="Pfeiffer B.D."/>
            <person name="Wan K.H."/>
            <person name="Doyle C."/>
            <person name="Baxter E.G."/>
            <person name="Helt G."/>
            <person name="Nelson C.R."/>
            <person name="Miklos G.L.G."/>
            <person name="Abril J.F."/>
            <person name="Agbayani A."/>
            <person name="An H.-J."/>
            <person name="Andrews-Pfannkoch C."/>
            <person name="Baldwin D."/>
            <person name="Ballew R.M."/>
            <person name="Basu A."/>
            <person name="Baxendale J."/>
            <person name="Bayraktaroglu L."/>
            <person name="Beasley E.M."/>
            <person name="Beeson K.Y."/>
            <person name="Benos P.V."/>
            <person name="Berman B.P."/>
            <person name="Bhandari D."/>
            <person name="Bolshakov S."/>
            <person name="Borkova D."/>
            <person name="Botchan M.R."/>
            <person name="Bouck J."/>
            <person name="Brokstein P."/>
            <person name="Brottier P."/>
            <person name="Burtis K.C."/>
            <person name="Busam D.A."/>
            <person name="Butler H."/>
            <person name="Cadieu E."/>
            <person name="Center A."/>
            <person name="Chandra I."/>
            <person name="Cherry J.M."/>
            <person name="Cawley S."/>
            <person name="Dahlke C."/>
            <person name="Davenport L.B."/>
            <person name="Davies P."/>
            <person name="de Pablos B."/>
            <person name="Delcher A."/>
            <person name="Deng Z."/>
            <person name="Mays A.D."/>
            <person name="Dew I."/>
            <person name="Dietz S.M."/>
            <person name="Dodson K."/>
            <person name="Doup L.E."/>
            <person name="Downes M."/>
            <person name="Dugan-Rocha S."/>
            <person name="Dunkov B.C."/>
            <person name="Dunn P."/>
            <person name="Durbin K.J."/>
            <person name="Evangelista C.C."/>
            <person name="Ferraz C."/>
            <person name="Ferriera S."/>
            <person name="Fleischmann W."/>
            <person name="Fosler C."/>
            <person name="Gabrielian A.E."/>
            <person name="Garg N.S."/>
            <person name="Gelbart W.M."/>
            <person name="Glasser K."/>
            <person name="Glodek A."/>
            <person name="Gong F."/>
            <person name="Gorrell J.H."/>
            <person name="Gu Z."/>
            <person name="Guan P."/>
            <person name="Harris M."/>
            <person name="Harris N.L."/>
            <person name="Harvey D.A."/>
            <person name="Heiman T.J."/>
            <person name="Hernandez J.R."/>
            <person name="Houck J."/>
            <person name="Hostin D."/>
            <person name="Houston K.A."/>
            <person name="Howland T.J."/>
            <person name="Wei M.-H."/>
            <person name="Ibegwam C."/>
            <person name="Jalali M."/>
            <person name="Kalush F."/>
            <person name="Karpen G.H."/>
            <person name="Ke Z."/>
            <person name="Kennison J.A."/>
            <person name="Ketchum K.A."/>
            <person name="Kimmel B.E."/>
            <person name="Kodira C.D."/>
            <person name="Kraft C.L."/>
            <person name="Kravitz S."/>
            <person name="Kulp D."/>
            <person name="Lai Z."/>
            <person name="Lasko P."/>
            <person name="Lei Y."/>
            <person name="Levitsky A.A."/>
            <person name="Li J.H."/>
            <person name="Li Z."/>
            <person name="Liang Y."/>
            <person name="Lin X."/>
            <person name="Liu X."/>
            <person name="Mattei B."/>
            <person name="McIntosh T.C."/>
            <person name="McLeod M.P."/>
            <person name="McPherson D."/>
            <person name="Merkulov G."/>
            <person name="Milshina N.V."/>
            <person name="Mobarry C."/>
            <person name="Morris J."/>
            <person name="Moshrefi A."/>
            <person name="Mount S.M."/>
            <person name="Moy M."/>
            <person name="Murphy B."/>
            <person name="Murphy L."/>
            <person name="Muzny D.M."/>
            <person name="Nelson D.L."/>
            <person name="Nelson D.R."/>
            <person name="Nelson K.A."/>
            <person name="Nixon K."/>
            <person name="Nusskern D.R."/>
            <person name="Pacleb J.M."/>
            <person name="Palazzolo M."/>
            <person name="Pittman G.S."/>
            <person name="Pan S."/>
            <person name="Pollard J."/>
            <person name="Puri V."/>
            <person name="Reese M.G."/>
            <person name="Reinert K."/>
            <person name="Remington K."/>
            <person name="Saunders R.D.C."/>
            <person name="Scheeler F."/>
            <person name="Shen H."/>
            <person name="Shue B.C."/>
            <person name="Siden-Kiamos I."/>
            <person name="Simpson M."/>
            <person name="Skupski M.P."/>
            <person name="Smith T.J."/>
            <person name="Spier E."/>
            <person name="Spradling A.C."/>
            <person name="Stapleton M."/>
            <person name="Strong R."/>
            <person name="Sun E."/>
            <person name="Svirskas R."/>
            <person name="Tector C."/>
            <person name="Turner R."/>
            <person name="Venter E."/>
            <person name="Wang A.H."/>
            <person name="Wang X."/>
            <person name="Wang Z.-Y."/>
            <person name="Wassarman D.A."/>
            <person name="Weinstock G.M."/>
            <person name="Weissenbach J."/>
            <person name="Williams S.M."/>
            <person name="Woodage T."/>
            <person name="Worley K.C."/>
            <person name="Wu D."/>
            <person name="Yang S."/>
            <person name="Yao Q.A."/>
            <person name="Ye J."/>
            <person name="Yeh R.-F."/>
            <person name="Zaveri J.S."/>
            <person name="Zhan M."/>
            <person name="Zhang G."/>
            <person name="Zhao Q."/>
            <person name="Zheng L."/>
            <person name="Zheng X.H."/>
            <person name="Zhong F.N."/>
            <person name="Zhong W."/>
            <person name="Zhou X."/>
            <person name="Zhu S.C."/>
            <person name="Zhu X."/>
            <person name="Smith H.O."/>
            <person name="Gibbs R.A."/>
            <person name="Myers E.W."/>
            <person name="Rubin G.M."/>
            <person name="Venter J.C."/>
        </authorList>
    </citation>
    <scope>NUCLEOTIDE SEQUENCE [LARGE SCALE GENOMIC DNA]</scope>
    <source>
        <strain>Berkeley</strain>
    </source>
</reference>
<reference key="2">
    <citation type="journal article" date="2002" name="Genome Biol.">
        <title>Annotation of the Drosophila melanogaster euchromatic genome: a systematic review.</title>
        <authorList>
            <person name="Misra S."/>
            <person name="Crosby M.A."/>
            <person name="Mungall C.J."/>
            <person name="Matthews B.B."/>
            <person name="Campbell K.S."/>
            <person name="Hradecky P."/>
            <person name="Huang Y."/>
            <person name="Kaminker J.S."/>
            <person name="Millburn G.H."/>
            <person name="Prochnik S.E."/>
            <person name="Smith C.D."/>
            <person name="Tupy J.L."/>
            <person name="Whitfield E.J."/>
            <person name="Bayraktaroglu L."/>
            <person name="Berman B.P."/>
            <person name="Bettencourt B.R."/>
            <person name="Celniker S.E."/>
            <person name="de Grey A.D.N.J."/>
            <person name="Drysdale R.A."/>
            <person name="Harris N.L."/>
            <person name="Richter J."/>
            <person name="Russo S."/>
            <person name="Schroeder A.J."/>
            <person name="Shu S.Q."/>
            <person name="Stapleton M."/>
            <person name="Yamada C."/>
            <person name="Ashburner M."/>
            <person name="Gelbart W.M."/>
            <person name="Rubin G.M."/>
            <person name="Lewis S.E."/>
        </authorList>
    </citation>
    <scope>GENOME REANNOTATION</scope>
    <source>
        <strain>Berkeley</strain>
    </source>
</reference>
<reference key="3">
    <citation type="journal article" date="2002" name="Genome Biol.">
        <title>A Drosophila full-length cDNA resource.</title>
        <authorList>
            <person name="Stapleton M."/>
            <person name="Carlson J.W."/>
            <person name="Brokstein P."/>
            <person name="Yu C."/>
            <person name="Champe M."/>
            <person name="George R.A."/>
            <person name="Guarin H."/>
            <person name="Kronmiller B."/>
            <person name="Pacleb J.M."/>
            <person name="Park S."/>
            <person name="Wan K.H."/>
            <person name="Rubin G.M."/>
            <person name="Celniker S.E."/>
        </authorList>
    </citation>
    <scope>NUCLEOTIDE SEQUENCE [LARGE SCALE MRNA]</scope>
    <source>
        <strain>Berkeley</strain>
        <tissue>Head</tissue>
    </source>
</reference>
<reference key="4">
    <citation type="journal article" date="2017" name="Science">
        <title>SAMTOR is an S-adenosylmethionine sensor for the mTORC1 pathway.</title>
        <authorList>
            <person name="Gu X."/>
            <person name="Orozco J.M."/>
            <person name="Saxton R.A."/>
            <person name="Condon K.J."/>
            <person name="Liu G.Y."/>
            <person name="Krawczyk P.A."/>
            <person name="Scaria S.M."/>
            <person name="Harper J.W."/>
            <person name="Gygi S.P."/>
            <person name="Sabatini D.M."/>
        </authorList>
    </citation>
    <scope>FUNCTION</scope>
</reference>
<reference key="5">
    <citation type="journal article" date="2023" name="Int. J. Mol. Sci.">
        <title>Genetic Targeting of dSAMTOR, A Negative dTORC1 Regulator, during Drosophila Aging: A Tissue-Specific Pathology.</title>
        <authorList>
            <person name="Katarachia S.A."/>
            <person name="Markaki S.P."/>
            <person name="Velentzas A.D."/>
            <person name="Stravopodis D.J."/>
        </authorList>
    </citation>
    <scope>DISRUPTION PHENOTYPE</scope>
</reference>
<reference key="6">
    <citation type="journal article" date="2024" name="Nat. Commun.">
        <title>An evolutionary mechanism to assimilate new nutrient sensors into the mTORC1 pathway.</title>
        <authorList>
            <person name="Liu G.Y."/>
            <person name="Jouandin P."/>
            <person name="Bahng R.E."/>
            <person name="Perrimon N."/>
            <person name="Sabatini D.M."/>
        </authorList>
    </citation>
    <scope>LACK OF INVOLVEMENT IN TORC1 METHIONINE SENSING</scope>
</reference>
<reference evidence="14 15 16" key="7">
    <citation type="journal article" date="2022" name="Sci. Adv.">
        <title>Molecular mechanism of S-adenosylmethionine sensing by SAMTOR in mTORC1 signaling.</title>
        <authorList>
            <person name="Tang X."/>
            <person name="Zhang Y."/>
            <person name="Wang G."/>
            <person name="Zhang C."/>
            <person name="Wang F."/>
            <person name="Shi J."/>
            <person name="Zhang T."/>
            <person name="Ding J."/>
        </authorList>
    </citation>
    <scope>X-RAY CRYSTALLOGRAPHY (2.09 ANGSTROMS) IN COMPLEX WITH S-ADENOSYL-L-HOMOCYSTEINE AND S-ADENOSYL-L-METHIONINE</scope>
    <scope>FUNCTION</scope>
    <scope>MUTAGENESIS OF LEU-151; PHE-163; LEU-197; TYR-201 AND MET-202</scope>
</reference>
<reference evidence="9 10" key="8">
    <citation type="submission" date="2022-08" db="PDB data bank">
        <title>S-adenosylmethionine sensor upstream of mTORC1.</title>
        <authorList>
            <person name="Zhang H."/>
            <person name="Li X.Z."/>
            <person name="Wen Y.N."/>
        </authorList>
    </citation>
    <scope>X-RAY CRYSTALLOGRAPHY (2.35 ANGSTROMS) OF 67-302 IN COMPLEX WITH S-ADENOSYL-L-METHIONINE</scope>
</reference>
<reference evidence="11 12" key="9">
    <citation type="submission" date="2022-08" db="PDB data bank">
        <title>Structure of methyltransferase.</title>
        <authorList>
            <person name="Zhang H."/>
            <person name="Li X.Z."/>
            <person name="Wen Y.N."/>
        </authorList>
    </citation>
    <scope>X-RAY CRYSTALLOGRAPHY (1.70 ANGSTROMS) OF 67-302</scope>
</reference>
<proteinExistence type="evidence at protein level"/>
<gene>
    <name evidence="6 8" type="primary">Samtor</name>
    <name evidence="8" type="ORF">CG3570</name>
</gene>